<keyword id="KW-1185">Reference proteome</keyword>
<proteinExistence type="predicted"/>
<dbReference type="EMBL" id="X14855">
    <property type="protein sequence ID" value="CAA32990.1"/>
    <property type="molecule type" value="Genomic_DNA"/>
</dbReference>
<dbReference type="SMR" id="P19294"/>
<dbReference type="Proteomes" id="UP000009250">
    <property type="component" value="Genome"/>
</dbReference>
<protein>
    <recommendedName>
        <fullName>Uncharacterized 6.1 kDa protein</fullName>
    </recommendedName>
</protein>
<reference key="1">
    <citation type="submission" date="1989-03" db="EMBL/GenBank/DDBJ databases">
        <authorList>
            <person name="Neumann H."/>
        </authorList>
    </citation>
    <scope>NUCLEOTIDE SEQUENCE [GENOMIC DNA]</scope>
</reference>
<sequence>MDMHMLRLLDLQCILHHRLQERMRATSVKLRQYPQILQQHRCGLHPRSLL</sequence>
<name>YORJ_TTV1K</name>
<organism>
    <name type="scientific">Thermoproteus tenax virus 1 (strain KRA1)</name>
    <name type="common">TTV1</name>
    <dbReference type="NCBI Taxonomy" id="10480"/>
    <lineage>
        <taxon>Viruses</taxon>
        <taxon>Adnaviria</taxon>
        <taxon>Zilligvirae</taxon>
        <taxon>Taleaviricota</taxon>
        <taxon>Tokiviricetes</taxon>
        <taxon>Primavirales</taxon>
        <taxon>Tristromaviridae</taxon>
        <taxon>Betatristromavirus</taxon>
        <taxon>Betatristromavirus TTV1</taxon>
    </lineage>
</organism>
<feature type="chain" id="PRO_0000222976" description="Uncharacterized 6.1 kDa protein">
    <location>
        <begin position="1"/>
        <end position="50"/>
    </location>
</feature>
<accession>P19294</accession>
<organismHost>
    <name type="scientific">Thermoproteus tenax</name>
    <dbReference type="NCBI Taxonomy" id="2271"/>
</organismHost>